<gene>
    <name type="primary">SPL12</name>
    <name type="ORF">OsI_023508</name>
</gene>
<evidence type="ECO:0000250" key="1"/>
<evidence type="ECO:0000255" key="2"/>
<evidence type="ECO:0000255" key="3">
    <source>
        <dbReference type="PROSITE-ProRule" id="PRU00470"/>
    </source>
</evidence>
<evidence type="ECO:0000256" key="4">
    <source>
        <dbReference type="SAM" id="MobiDB-lite"/>
    </source>
</evidence>
<evidence type="ECO:0000269" key="5">
    <source>
    </source>
</evidence>
<evidence type="ECO:0000305" key="6"/>
<evidence type="ECO:0000305" key="7">
    <source>
    </source>
</evidence>
<sequence length="475" mass="50747">MASFGMNWNQKSPVFWDWENPAPFGPNTMENPKSIPHPEPRGVVVAAANHGSTNSSGGTFTSSSELANGSSKSSLSASFDSSSKLGNSLEFRFASVKGHGKNMCKDGEAGRVEDSGTSPAVAVSHGEPVIGLKLGKRTYFENVCGGQNVKSSSAASGVTCPSTVVKKMKVSQQSTQSSYCQVEGCKVDLSSAREYHRKHKVCEAHSKAPKVIVSGLERRFCQQCSRFHGLAEFDQKKKSCRRRLSDHNARRRKPQQEAISFGSSRLATMFYDARQQTDIYFGQSPFGQVRSNAISSCDNLGGFKFTEAKLPWMKPMKTIGLEDLNFSTLQMPGNVVSHTVHHHDFDGLIPFKGNTTKVLNQGVDPACAVVSSNSNGAPDLRRALSLLSSDSWGPADVQAGSQVHPGGVMPPLAVAAATVTAPTNPVSVMHALHPSTGGGGFWQDGDDPPPLDHASQAQAFMHPGNGSSSGYGHLH</sequence>
<comment type="function">
    <text evidence="1">Trans-acting factor that binds specifically to the consensus nucleotide sequence 5'-TNCGTACAA-3' (By similarity). May be involved in panicle development.</text>
</comment>
<comment type="subcellular location">
    <subcellularLocation>
        <location evidence="6">Nucleus</location>
    </subcellularLocation>
</comment>
<comment type="tissue specificity">
    <text evidence="5">Expressed in young panicles.</text>
</comment>
<comment type="induction">
    <text evidence="7">Negatively regulated by microRNAs miR156b and miR156h.</text>
</comment>
<comment type="domain">
    <text evidence="1">The SBP-type zinc finger is required for the binding to DNA.</text>
</comment>
<proteinExistence type="evidence at transcript level"/>
<reference key="1">
    <citation type="journal article" date="2005" name="PLoS Biol.">
        <title>The genomes of Oryza sativa: a history of duplications.</title>
        <authorList>
            <person name="Yu J."/>
            <person name="Wang J."/>
            <person name="Lin W."/>
            <person name="Li S."/>
            <person name="Li H."/>
            <person name="Zhou J."/>
            <person name="Ni P."/>
            <person name="Dong W."/>
            <person name="Hu S."/>
            <person name="Zeng C."/>
            <person name="Zhang J."/>
            <person name="Zhang Y."/>
            <person name="Li R."/>
            <person name="Xu Z."/>
            <person name="Li S."/>
            <person name="Li X."/>
            <person name="Zheng H."/>
            <person name="Cong L."/>
            <person name="Lin L."/>
            <person name="Yin J."/>
            <person name="Geng J."/>
            <person name="Li G."/>
            <person name="Shi J."/>
            <person name="Liu J."/>
            <person name="Lv H."/>
            <person name="Li J."/>
            <person name="Wang J."/>
            <person name="Deng Y."/>
            <person name="Ran L."/>
            <person name="Shi X."/>
            <person name="Wang X."/>
            <person name="Wu Q."/>
            <person name="Li C."/>
            <person name="Ren X."/>
            <person name="Wang J."/>
            <person name="Wang X."/>
            <person name="Li D."/>
            <person name="Liu D."/>
            <person name="Zhang X."/>
            <person name="Ji Z."/>
            <person name="Zhao W."/>
            <person name="Sun Y."/>
            <person name="Zhang Z."/>
            <person name="Bao J."/>
            <person name="Han Y."/>
            <person name="Dong L."/>
            <person name="Ji J."/>
            <person name="Chen P."/>
            <person name="Wu S."/>
            <person name="Liu J."/>
            <person name="Xiao Y."/>
            <person name="Bu D."/>
            <person name="Tan J."/>
            <person name="Yang L."/>
            <person name="Ye C."/>
            <person name="Zhang J."/>
            <person name="Xu J."/>
            <person name="Zhou Y."/>
            <person name="Yu Y."/>
            <person name="Zhang B."/>
            <person name="Zhuang S."/>
            <person name="Wei H."/>
            <person name="Liu B."/>
            <person name="Lei M."/>
            <person name="Yu H."/>
            <person name="Li Y."/>
            <person name="Xu H."/>
            <person name="Wei S."/>
            <person name="He X."/>
            <person name="Fang L."/>
            <person name="Zhang Z."/>
            <person name="Zhang Y."/>
            <person name="Huang X."/>
            <person name="Su Z."/>
            <person name="Tong W."/>
            <person name="Li J."/>
            <person name="Tong Z."/>
            <person name="Li S."/>
            <person name="Ye J."/>
            <person name="Wang L."/>
            <person name="Fang L."/>
            <person name="Lei T."/>
            <person name="Chen C.-S."/>
            <person name="Chen H.-C."/>
            <person name="Xu Z."/>
            <person name="Li H."/>
            <person name="Huang H."/>
            <person name="Zhang F."/>
            <person name="Xu H."/>
            <person name="Li N."/>
            <person name="Zhao C."/>
            <person name="Li S."/>
            <person name="Dong L."/>
            <person name="Huang Y."/>
            <person name="Li L."/>
            <person name="Xi Y."/>
            <person name="Qi Q."/>
            <person name="Li W."/>
            <person name="Zhang B."/>
            <person name="Hu W."/>
            <person name="Zhang Y."/>
            <person name="Tian X."/>
            <person name="Jiao Y."/>
            <person name="Liang X."/>
            <person name="Jin J."/>
            <person name="Gao L."/>
            <person name="Zheng W."/>
            <person name="Hao B."/>
            <person name="Liu S.-M."/>
            <person name="Wang W."/>
            <person name="Yuan L."/>
            <person name="Cao M."/>
            <person name="McDermott J."/>
            <person name="Samudrala R."/>
            <person name="Wang J."/>
            <person name="Wong G.K.-S."/>
            <person name="Yang H."/>
        </authorList>
    </citation>
    <scope>NUCLEOTIDE SEQUENCE [LARGE SCALE GENOMIC DNA]</scope>
    <source>
        <strain>cv. 93-11</strain>
    </source>
</reference>
<reference key="2">
    <citation type="journal article" date="2006" name="Plant Physiol.">
        <title>Genomic organization, differential expression, and interaction of SQUAMOSA promoter-binding-like transcription factors and microRNA156 in rice.</title>
        <authorList>
            <person name="Xie K."/>
            <person name="Wu C."/>
            <person name="Xiong L."/>
        </authorList>
    </citation>
    <scope>TISSUE SPECIFICITY</scope>
    <scope>INDUCTION</scope>
    <scope>GENE FAMILY</scope>
    <scope>NOMENCLATURE</scope>
</reference>
<reference key="3">
    <citation type="journal article" date="2008" name="Gene">
        <title>Comparative study of SBP-box gene family in Arabidopsis and rice.</title>
        <authorList>
            <person name="Yang Z."/>
            <person name="Wang X."/>
            <person name="Gu S."/>
            <person name="Hu Z."/>
            <person name="Xu H."/>
            <person name="Xu C."/>
        </authorList>
    </citation>
    <scope>GENE FAMILY</scope>
</reference>
<accession>A2YGR5</accession>
<dbReference type="EMBL" id="CM000131">
    <property type="protein sequence ID" value="EAZ02276.1"/>
    <property type="molecule type" value="Genomic_DNA"/>
</dbReference>
<dbReference type="SMR" id="A2YGR5"/>
<dbReference type="STRING" id="39946.A2YGR5"/>
<dbReference type="EnsemblPlants" id="BGIOSGA020577-TA">
    <property type="protein sequence ID" value="BGIOSGA020577-PA"/>
    <property type="gene ID" value="BGIOSGA020577"/>
</dbReference>
<dbReference type="EnsemblPlants" id="OsGoSa_06g0027870.01">
    <property type="protein sequence ID" value="OsGoSa_06g0027870.01"/>
    <property type="gene ID" value="OsGoSa_06g0027870"/>
</dbReference>
<dbReference type="EnsemblPlants" id="OsGoSa_06g0027870.02">
    <property type="protein sequence ID" value="OsGoSa_06g0027870.02"/>
    <property type="gene ID" value="OsGoSa_06g0027870"/>
</dbReference>
<dbReference type="EnsemblPlants" id="OsIR64_06g0027690.01">
    <property type="protein sequence ID" value="OsIR64_06g0027690.01"/>
    <property type="gene ID" value="OsIR64_06g0027690"/>
</dbReference>
<dbReference type="EnsemblPlants" id="OsIR64_06g0027690.02">
    <property type="protein sequence ID" value="OsIR64_06g0027690.02"/>
    <property type="gene ID" value="OsIR64_06g0027690"/>
</dbReference>
<dbReference type="EnsemblPlants" id="OsIR64_06g0027690.03">
    <property type="protein sequence ID" value="OsIR64_06g0027690.03"/>
    <property type="gene ID" value="OsIR64_06g0027690"/>
</dbReference>
<dbReference type="EnsemblPlants" id="OsKYG_06g0028280.01">
    <property type="protein sequence ID" value="OsKYG_06g0028280.01"/>
    <property type="gene ID" value="OsKYG_06g0028280"/>
</dbReference>
<dbReference type="EnsemblPlants" id="OsKYG_06g0028280.02">
    <property type="protein sequence ID" value="OsKYG_06g0028280.02"/>
    <property type="gene ID" value="OsKYG_06g0028280"/>
</dbReference>
<dbReference type="EnsemblPlants" id="OsLima_06g0028230.01">
    <property type="protein sequence ID" value="OsLima_06g0028230.01"/>
    <property type="gene ID" value="OsLima_06g0028230"/>
</dbReference>
<dbReference type="EnsemblPlants" id="OsLima_06g0028230.02">
    <property type="protein sequence ID" value="OsLima_06g0028230.02"/>
    <property type="gene ID" value="OsLima_06g0028230"/>
</dbReference>
<dbReference type="EnsemblPlants" id="OsLiXu_06g0028530.01">
    <property type="protein sequence ID" value="OsLiXu_06g0028530.01"/>
    <property type="gene ID" value="OsLiXu_06g0028530"/>
</dbReference>
<dbReference type="EnsemblPlants" id="OsLiXu_06g0028530.02">
    <property type="protein sequence ID" value="OsLiXu_06g0028530.02"/>
    <property type="gene ID" value="OsLiXu_06g0028530"/>
</dbReference>
<dbReference type="EnsemblPlants" id="OsMH63_06G028240_01">
    <property type="protein sequence ID" value="OsMH63_06G028240_01"/>
    <property type="gene ID" value="OsMH63_06G028240"/>
</dbReference>
<dbReference type="EnsemblPlants" id="OsMH63_06G028240_02">
    <property type="protein sequence ID" value="OsMH63_06G028240_02"/>
    <property type="gene ID" value="OsMH63_06G028240"/>
</dbReference>
<dbReference type="EnsemblPlants" id="OsMH63_06G028240_03">
    <property type="protein sequence ID" value="OsMH63_06G028240_03"/>
    <property type="gene ID" value="OsMH63_06G028240"/>
</dbReference>
<dbReference type="EnsemblPlants" id="OsMH63_06G028240_04">
    <property type="protein sequence ID" value="OsMH63_06G028240_04"/>
    <property type="gene ID" value="OsMH63_06G028240"/>
</dbReference>
<dbReference type="EnsemblPlants" id="OsMH63_06G028240_06">
    <property type="protein sequence ID" value="OsMH63_06G028240_06"/>
    <property type="gene ID" value="OsMH63_06G028240"/>
</dbReference>
<dbReference type="EnsemblPlants" id="OsPr106_06g0028320.01">
    <property type="protein sequence ID" value="OsPr106_06g0028320.01"/>
    <property type="gene ID" value="OsPr106_06g0028320"/>
</dbReference>
<dbReference type="EnsemblPlants" id="OsPr106_06g0028320.02">
    <property type="protein sequence ID" value="OsPr106_06g0028320.02"/>
    <property type="gene ID" value="OsPr106_06g0028320"/>
</dbReference>
<dbReference type="EnsemblPlants" id="OsZS97_06G028460_02">
    <property type="protein sequence ID" value="OsZS97_06G028460_02"/>
    <property type="gene ID" value="OsZS97_06G028460"/>
</dbReference>
<dbReference type="EnsemblPlants" id="OsZS97_06G028460_03">
    <property type="protein sequence ID" value="OsZS97_06G028460_03"/>
    <property type="gene ID" value="OsZS97_06G028460"/>
</dbReference>
<dbReference type="EnsemblPlants" id="OsZS97_06G028460_04">
    <property type="protein sequence ID" value="OsZS97_06G028460_04"/>
    <property type="gene ID" value="OsZS97_06G028460"/>
</dbReference>
<dbReference type="Gramene" id="BGIOSGA020577-TA">
    <property type="protein sequence ID" value="BGIOSGA020577-PA"/>
    <property type="gene ID" value="BGIOSGA020577"/>
</dbReference>
<dbReference type="Gramene" id="OsGoSa_06g0027870.01">
    <property type="protein sequence ID" value="OsGoSa_06g0027870.01"/>
    <property type="gene ID" value="OsGoSa_06g0027870"/>
</dbReference>
<dbReference type="Gramene" id="OsGoSa_06g0027870.02">
    <property type="protein sequence ID" value="OsGoSa_06g0027870.02"/>
    <property type="gene ID" value="OsGoSa_06g0027870"/>
</dbReference>
<dbReference type="Gramene" id="OsIR64_06g0027690.01">
    <property type="protein sequence ID" value="OsIR64_06g0027690.01"/>
    <property type="gene ID" value="OsIR64_06g0027690"/>
</dbReference>
<dbReference type="Gramene" id="OsIR64_06g0027690.02">
    <property type="protein sequence ID" value="OsIR64_06g0027690.02"/>
    <property type="gene ID" value="OsIR64_06g0027690"/>
</dbReference>
<dbReference type="Gramene" id="OsIR64_06g0027690.03">
    <property type="protein sequence ID" value="OsIR64_06g0027690.03"/>
    <property type="gene ID" value="OsIR64_06g0027690"/>
</dbReference>
<dbReference type="Gramene" id="OsKYG_06g0028280.01">
    <property type="protein sequence ID" value="OsKYG_06g0028280.01"/>
    <property type="gene ID" value="OsKYG_06g0028280"/>
</dbReference>
<dbReference type="Gramene" id="OsKYG_06g0028280.02">
    <property type="protein sequence ID" value="OsKYG_06g0028280.02"/>
    <property type="gene ID" value="OsKYG_06g0028280"/>
</dbReference>
<dbReference type="Gramene" id="OsLima_06g0028230.01">
    <property type="protein sequence ID" value="OsLima_06g0028230.01"/>
    <property type="gene ID" value="OsLima_06g0028230"/>
</dbReference>
<dbReference type="Gramene" id="OsLima_06g0028230.02">
    <property type="protein sequence ID" value="OsLima_06g0028230.02"/>
    <property type="gene ID" value="OsLima_06g0028230"/>
</dbReference>
<dbReference type="Gramene" id="OsLiXu_06g0028530.01">
    <property type="protein sequence ID" value="OsLiXu_06g0028530.01"/>
    <property type="gene ID" value="OsLiXu_06g0028530"/>
</dbReference>
<dbReference type="Gramene" id="OsLiXu_06g0028530.02">
    <property type="protein sequence ID" value="OsLiXu_06g0028530.02"/>
    <property type="gene ID" value="OsLiXu_06g0028530"/>
</dbReference>
<dbReference type="Gramene" id="OsMH63_06G028240_01">
    <property type="protein sequence ID" value="OsMH63_06G028240_01"/>
    <property type="gene ID" value="OsMH63_06G028240"/>
</dbReference>
<dbReference type="Gramene" id="OsMH63_06G028240_02">
    <property type="protein sequence ID" value="OsMH63_06G028240_02"/>
    <property type="gene ID" value="OsMH63_06G028240"/>
</dbReference>
<dbReference type="Gramene" id="OsMH63_06G028240_03">
    <property type="protein sequence ID" value="OsMH63_06G028240_03"/>
    <property type="gene ID" value="OsMH63_06G028240"/>
</dbReference>
<dbReference type="Gramene" id="OsMH63_06G028240_04">
    <property type="protein sequence ID" value="OsMH63_06G028240_04"/>
    <property type="gene ID" value="OsMH63_06G028240"/>
</dbReference>
<dbReference type="Gramene" id="OsMH63_06G028240_06">
    <property type="protein sequence ID" value="OsMH63_06G028240_06"/>
    <property type="gene ID" value="OsMH63_06G028240"/>
</dbReference>
<dbReference type="Gramene" id="OsPr106_06g0028320.01">
    <property type="protein sequence ID" value="OsPr106_06g0028320.01"/>
    <property type="gene ID" value="OsPr106_06g0028320"/>
</dbReference>
<dbReference type="Gramene" id="OsPr106_06g0028320.02">
    <property type="protein sequence ID" value="OsPr106_06g0028320.02"/>
    <property type="gene ID" value="OsPr106_06g0028320"/>
</dbReference>
<dbReference type="Gramene" id="OsZS97_06G028460_02">
    <property type="protein sequence ID" value="OsZS97_06G028460_02"/>
    <property type="gene ID" value="OsZS97_06G028460"/>
</dbReference>
<dbReference type="Gramene" id="OsZS97_06G028460_03">
    <property type="protein sequence ID" value="OsZS97_06G028460_03"/>
    <property type="gene ID" value="OsZS97_06G028460"/>
</dbReference>
<dbReference type="Gramene" id="OsZS97_06G028460_04">
    <property type="protein sequence ID" value="OsZS97_06G028460_04"/>
    <property type="gene ID" value="OsZS97_06G028460"/>
</dbReference>
<dbReference type="HOGENOM" id="CLU_026055_2_0_1"/>
<dbReference type="OMA" id="MEWEIDG"/>
<dbReference type="OrthoDB" id="514967at2759"/>
<dbReference type="Proteomes" id="UP000007015">
    <property type="component" value="Chromosome 6"/>
</dbReference>
<dbReference type="GO" id="GO:0005634">
    <property type="term" value="C:nucleus"/>
    <property type="evidence" value="ECO:0007669"/>
    <property type="project" value="UniProtKB-SubCell"/>
</dbReference>
<dbReference type="GO" id="GO:0003677">
    <property type="term" value="F:DNA binding"/>
    <property type="evidence" value="ECO:0007669"/>
    <property type="project" value="UniProtKB-KW"/>
</dbReference>
<dbReference type="GO" id="GO:0008270">
    <property type="term" value="F:zinc ion binding"/>
    <property type="evidence" value="ECO:0007669"/>
    <property type="project" value="UniProtKB-KW"/>
</dbReference>
<dbReference type="FunFam" id="4.10.1100.10:FF:000001">
    <property type="entry name" value="Squamosa promoter-binding-like protein 14"/>
    <property type="match status" value="1"/>
</dbReference>
<dbReference type="Gene3D" id="4.10.1100.10">
    <property type="entry name" value="Transcription factor, SBP-box domain"/>
    <property type="match status" value="1"/>
</dbReference>
<dbReference type="InterPro" id="IPR044817">
    <property type="entry name" value="SBP-like"/>
</dbReference>
<dbReference type="InterPro" id="IPR004333">
    <property type="entry name" value="SBP_dom"/>
</dbReference>
<dbReference type="InterPro" id="IPR036893">
    <property type="entry name" value="SBP_sf"/>
</dbReference>
<dbReference type="PANTHER" id="PTHR31251:SF74">
    <property type="entry name" value="SQUAMOSA PROMOTER-BINDING-LIKE PROTEIN 2"/>
    <property type="match status" value="1"/>
</dbReference>
<dbReference type="PANTHER" id="PTHR31251">
    <property type="entry name" value="SQUAMOSA PROMOTER-BINDING-LIKE PROTEIN 4"/>
    <property type="match status" value="1"/>
</dbReference>
<dbReference type="Pfam" id="PF03110">
    <property type="entry name" value="SBP"/>
    <property type="match status" value="1"/>
</dbReference>
<dbReference type="SUPFAM" id="SSF103612">
    <property type="entry name" value="SBT domain"/>
    <property type="match status" value="1"/>
</dbReference>
<dbReference type="PROSITE" id="PS51141">
    <property type="entry name" value="ZF_SBP"/>
    <property type="match status" value="1"/>
</dbReference>
<organism>
    <name type="scientific">Oryza sativa subsp. indica</name>
    <name type="common">Rice</name>
    <dbReference type="NCBI Taxonomy" id="39946"/>
    <lineage>
        <taxon>Eukaryota</taxon>
        <taxon>Viridiplantae</taxon>
        <taxon>Streptophyta</taxon>
        <taxon>Embryophyta</taxon>
        <taxon>Tracheophyta</taxon>
        <taxon>Spermatophyta</taxon>
        <taxon>Magnoliopsida</taxon>
        <taxon>Liliopsida</taxon>
        <taxon>Poales</taxon>
        <taxon>Poaceae</taxon>
        <taxon>BOP clade</taxon>
        <taxon>Oryzoideae</taxon>
        <taxon>Oryzeae</taxon>
        <taxon>Oryzinae</taxon>
        <taxon>Oryza</taxon>
        <taxon>Oryza sativa</taxon>
    </lineage>
</organism>
<feature type="chain" id="PRO_0000308239" description="Squamosa promoter-binding-like protein 12">
    <location>
        <begin position="1"/>
        <end position="475"/>
    </location>
</feature>
<feature type="zinc finger region" description="SBP-type" evidence="3">
    <location>
        <begin position="177"/>
        <end position="254"/>
    </location>
</feature>
<feature type="region of interest" description="Disordered" evidence="4">
    <location>
        <begin position="49"/>
        <end position="73"/>
    </location>
</feature>
<feature type="region of interest" description="Disordered" evidence="4">
    <location>
        <begin position="437"/>
        <end position="475"/>
    </location>
</feature>
<feature type="short sequence motif" description="Bipartite nuclear localization signal" evidence="2">
    <location>
        <begin position="237"/>
        <end position="253"/>
    </location>
</feature>
<feature type="compositionally biased region" description="Low complexity" evidence="4">
    <location>
        <begin position="51"/>
        <end position="73"/>
    </location>
</feature>
<feature type="compositionally biased region" description="Polar residues" evidence="4">
    <location>
        <begin position="465"/>
        <end position="475"/>
    </location>
</feature>
<feature type="binding site" evidence="3">
    <location>
        <position position="180"/>
    </location>
    <ligand>
        <name>Zn(2+)</name>
        <dbReference type="ChEBI" id="CHEBI:29105"/>
        <label>1</label>
    </ligand>
</feature>
<feature type="binding site" evidence="3">
    <location>
        <position position="185"/>
    </location>
    <ligand>
        <name>Zn(2+)</name>
        <dbReference type="ChEBI" id="CHEBI:29105"/>
        <label>1</label>
    </ligand>
</feature>
<feature type="binding site" evidence="3">
    <location>
        <position position="202"/>
    </location>
    <ligand>
        <name>Zn(2+)</name>
        <dbReference type="ChEBI" id="CHEBI:29105"/>
        <label>1</label>
    </ligand>
</feature>
<feature type="binding site" evidence="3">
    <location>
        <position position="205"/>
    </location>
    <ligand>
        <name>Zn(2+)</name>
        <dbReference type="ChEBI" id="CHEBI:29105"/>
        <label>1</label>
    </ligand>
</feature>
<feature type="binding site" evidence="3">
    <location>
        <position position="221"/>
    </location>
    <ligand>
        <name>Zn(2+)</name>
        <dbReference type="ChEBI" id="CHEBI:29105"/>
        <label>2</label>
    </ligand>
</feature>
<feature type="binding site" evidence="3">
    <location>
        <position position="224"/>
    </location>
    <ligand>
        <name>Zn(2+)</name>
        <dbReference type="ChEBI" id="CHEBI:29105"/>
        <label>2</label>
    </ligand>
</feature>
<feature type="binding site" evidence="3">
    <location>
        <position position="228"/>
    </location>
    <ligand>
        <name>Zn(2+)</name>
        <dbReference type="ChEBI" id="CHEBI:29105"/>
        <label>2</label>
    </ligand>
</feature>
<feature type="binding site" evidence="3">
    <location>
        <position position="240"/>
    </location>
    <ligand>
        <name>Zn(2+)</name>
        <dbReference type="ChEBI" id="CHEBI:29105"/>
        <label>2</label>
    </ligand>
</feature>
<name>SPL12_ORYSI</name>
<keyword id="KW-0238">DNA-binding</keyword>
<keyword id="KW-0479">Metal-binding</keyword>
<keyword id="KW-0539">Nucleus</keyword>
<keyword id="KW-1185">Reference proteome</keyword>
<keyword id="KW-0804">Transcription</keyword>
<keyword id="KW-0805">Transcription regulation</keyword>
<keyword id="KW-0862">Zinc</keyword>
<keyword id="KW-0863">Zinc-finger</keyword>
<protein>
    <recommendedName>
        <fullName>Squamosa promoter-binding-like protein 12</fullName>
    </recommendedName>
</protein>